<feature type="propeptide" id="PRO_0000427736" evidence="1">
    <location>
        <begin position="1"/>
        <end position="6"/>
    </location>
</feature>
<feature type="chain" id="PRO_0000427737" description="Metallothionein">
    <location>
        <begin position="7"/>
        <end position="53"/>
    </location>
</feature>
<feature type="binding site" evidence="2">
    <location>
        <position position="17"/>
    </location>
    <ligand>
        <name>Cu(+)</name>
        <dbReference type="ChEBI" id="CHEBI:49552"/>
        <label>1</label>
    </ligand>
</feature>
<feature type="binding site" evidence="2">
    <location>
        <position position="17"/>
    </location>
    <ligand>
        <name>Cu(+)</name>
        <dbReference type="ChEBI" id="CHEBI:49552"/>
        <label>2</label>
    </ligand>
</feature>
<feature type="binding site" evidence="2">
    <location>
        <position position="19"/>
    </location>
    <ligand>
        <name>Cu(+)</name>
        <dbReference type="ChEBI" id="CHEBI:49552"/>
        <label>2</label>
    </ligand>
</feature>
<feature type="binding site" evidence="2">
    <location>
        <position position="22"/>
    </location>
    <ligand>
        <name>Cu(+)</name>
        <dbReference type="ChEBI" id="CHEBI:49552"/>
        <label>1</label>
    </ligand>
</feature>
<feature type="binding site" evidence="2">
    <location>
        <position position="24"/>
    </location>
    <ligand>
        <name>Cu(+)</name>
        <dbReference type="ChEBI" id="CHEBI:49552"/>
        <label>3</label>
    </ligand>
</feature>
<feature type="binding site" evidence="2">
    <location>
        <position position="24"/>
    </location>
    <ligand>
        <name>Cu(+)</name>
        <dbReference type="ChEBI" id="CHEBI:49552"/>
        <label>4</label>
    </ligand>
</feature>
<feature type="binding site" evidence="2">
    <location>
        <position position="32"/>
    </location>
    <ligand>
        <name>Cu(+)</name>
        <dbReference type="ChEBI" id="CHEBI:49552"/>
        <label>3</label>
    </ligand>
</feature>
<feature type="binding site" evidence="2">
    <location>
        <position position="32"/>
    </location>
    <ligand>
        <name>Cu(+)</name>
        <dbReference type="ChEBI" id="CHEBI:49552"/>
        <label>4</label>
    </ligand>
</feature>
<feature type="binding site" evidence="2">
    <location>
        <position position="33"/>
    </location>
    <ligand>
        <name>Cu(+)</name>
        <dbReference type="ChEBI" id="CHEBI:49552"/>
        <label>4</label>
    </ligand>
</feature>
<feature type="binding site" evidence="2">
    <location>
        <position position="34"/>
    </location>
    <ligand>
        <name>Cu(+)</name>
        <dbReference type="ChEBI" id="CHEBI:49552"/>
        <label>1</label>
    </ligand>
</feature>
<feature type="binding site" evidence="2">
    <location>
        <position position="43"/>
    </location>
    <ligand>
        <name>Cu(+)</name>
        <dbReference type="ChEBI" id="CHEBI:49552"/>
        <label>3</label>
    </ligand>
</feature>
<feature type="binding site" evidence="2">
    <location>
        <position position="45"/>
    </location>
    <ligand>
        <name>Cu(+)</name>
        <dbReference type="ChEBI" id="CHEBI:49552"/>
        <label>2</label>
    </ligand>
</feature>
<feature type="binding site" evidence="2">
    <location>
        <position position="45"/>
    </location>
    <ligand>
        <name>Cu(+)</name>
        <dbReference type="ChEBI" id="CHEBI:49552"/>
        <label>3</label>
    </ligand>
</feature>
<organism>
    <name type="scientific">Mycobacterium tuberculosis (strain CDC 1551 / Oshkosh)</name>
    <dbReference type="NCBI Taxonomy" id="83331"/>
    <lineage>
        <taxon>Bacteria</taxon>
        <taxon>Bacillati</taxon>
        <taxon>Actinomycetota</taxon>
        <taxon>Actinomycetes</taxon>
        <taxon>Mycobacteriales</taxon>
        <taxon>Mycobacteriaceae</taxon>
        <taxon>Mycobacterium</taxon>
        <taxon>Mycobacterium tuberculosis complex</taxon>
    </lineage>
</organism>
<dbReference type="EMBL" id="AE000516">
    <property type="protein sequence ID" value="AAK44416.1"/>
    <property type="molecule type" value="Genomic_DNA"/>
</dbReference>
<dbReference type="RefSeq" id="WP_010886068.1">
    <property type="nucleotide sequence ID" value="NZ_KK341227.1"/>
</dbReference>
<dbReference type="GeneID" id="45424157"/>
<dbReference type="KEGG" id="mtc:MT0196"/>
<dbReference type="PATRIC" id="fig|83331.31.peg.213"/>
<dbReference type="HOGENOM" id="CLU_3137876_0_0_11"/>
<dbReference type="Proteomes" id="UP000001020">
    <property type="component" value="Chromosome"/>
</dbReference>
<dbReference type="GO" id="GO:0046872">
    <property type="term" value="F:metal ion binding"/>
    <property type="evidence" value="ECO:0007669"/>
    <property type="project" value="UniProtKB-KW"/>
</dbReference>
<protein>
    <recommendedName>
        <fullName>Metallothionein</fullName>
        <shortName>MT</shortName>
    </recommendedName>
    <alternativeName>
        <fullName>Copper-binding metallothionein</fullName>
        <shortName>Cu(I)-binding metallothionein</shortName>
    </alternativeName>
    <alternativeName>
        <fullName>Mycobacterial metallothionein</fullName>
    </alternativeName>
</protein>
<accession>P9WK08</accession>
<accession>P0CI28</accession>
<accession>Q8VKQ2</accession>
<keyword id="KW-0186">Copper</keyword>
<keyword id="KW-0479">Metal-binding</keyword>
<keyword id="KW-0480">Metal-thiolate cluster</keyword>
<keyword id="KW-1185">Reference proteome</keyword>
<reference key="1">
    <citation type="journal article" date="2002" name="J. Bacteriol.">
        <title>Whole-genome comparison of Mycobacterium tuberculosis clinical and laboratory strains.</title>
        <authorList>
            <person name="Fleischmann R.D."/>
            <person name="Alland D."/>
            <person name="Eisen J.A."/>
            <person name="Carpenter L."/>
            <person name="White O."/>
            <person name="Peterson J.D."/>
            <person name="DeBoy R.T."/>
            <person name="Dodson R.J."/>
            <person name="Gwinn M.L."/>
            <person name="Haft D.H."/>
            <person name="Hickey E.K."/>
            <person name="Kolonay J.F."/>
            <person name="Nelson W.C."/>
            <person name="Umayam L.A."/>
            <person name="Ermolaeva M.D."/>
            <person name="Salzberg S.L."/>
            <person name="Delcher A."/>
            <person name="Utterback T.R."/>
            <person name="Weidman J.F."/>
            <person name="Khouri H.M."/>
            <person name="Gill J."/>
            <person name="Mikula A."/>
            <person name="Bishai W."/>
            <person name="Jacobs W.R. Jr."/>
            <person name="Venter J.C."/>
            <person name="Fraser C.M."/>
        </authorList>
    </citation>
    <scope>NUCLEOTIDE SEQUENCE [LARGE SCALE GENOMIC DNA]</scope>
    <source>
        <strain>CDC 1551 / Oshkosh</strain>
    </source>
</reference>
<sequence length="53" mass="5719">MRVIRMTNYEAGTLLTCSHEGCGCRVRIEVPCHCAGAGDAYRCTCGDELAPVK</sequence>
<gene>
    <name type="primary">mymT</name>
    <name type="ordered locus">MT0196</name>
</gene>
<name>MYMT_MYCTO</name>
<evidence type="ECO:0000250" key="1"/>
<evidence type="ECO:0000305" key="2"/>
<proteinExistence type="inferred from homology"/>
<comment type="function">
    <text evidence="1">Metallothioneins are small proteins that have a high content of cysteine residues which allow them to bind heavy metal ions through clusters of thiolate bonds. MymT binds up to seven ions of Cu(+), with a preference for four to six Cu(+) ions, in a solvent-shielded core. MymT protects M.tuberculosis from copper toxicity (By similarity).</text>
</comment>
<comment type="similarity">
    <text evidence="2">Belongs to the metallothionein superfamily.</text>
</comment>